<feature type="chain" id="PRO_0000241060" description="S-adenosylmethionine synthase">
    <location>
        <begin position="1"/>
        <end position="403"/>
    </location>
</feature>
<feature type="region of interest" description="Flexible loop" evidence="1">
    <location>
        <begin position="99"/>
        <end position="109"/>
    </location>
</feature>
<feature type="binding site" description="in other chain" evidence="1">
    <location>
        <position position="15"/>
    </location>
    <ligand>
        <name>ATP</name>
        <dbReference type="ChEBI" id="CHEBI:30616"/>
        <note>ligand shared between two neighboring subunits</note>
    </ligand>
</feature>
<feature type="binding site" evidence="1">
    <location>
        <position position="17"/>
    </location>
    <ligand>
        <name>Mg(2+)</name>
        <dbReference type="ChEBI" id="CHEBI:18420"/>
    </ligand>
</feature>
<feature type="binding site" evidence="1">
    <location>
        <position position="43"/>
    </location>
    <ligand>
        <name>K(+)</name>
        <dbReference type="ChEBI" id="CHEBI:29103"/>
    </ligand>
</feature>
<feature type="binding site" description="in other chain" evidence="1">
    <location>
        <position position="56"/>
    </location>
    <ligand>
        <name>L-methionine</name>
        <dbReference type="ChEBI" id="CHEBI:57844"/>
        <note>ligand shared between two neighboring subunits</note>
    </ligand>
</feature>
<feature type="binding site" description="in other chain" evidence="1">
    <location>
        <position position="99"/>
    </location>
    <ligand>
        <name>L-methionine</name>
        <dbReference type="ChEBI" id="CHEBI:57844"/>
        <note>ligand shared between two neighboring subunits</note>
    </ligand>
</feature>
<feature type="binding site" description="in other chain" evidence="1">
    <location>
        <begin position="166"/>
        <end position="168"/>
    </location>
    <ligand>
        <name>ATP</name>
        <dbReference type="ChEBI" id="CHEBI:30616"/>
        <note>ligand shared between two neighboring subunits</note>
    </ligand>
</feature>
<feature type="binding site" description="in other chain" evidence="1">
    <location>
        <begin position="232"/>
        <end position="233"/>
    </location>
    <ligand>
        <name>ATP</name>
        <dbReference type="ChEBI" id="CHEBI:30616"/>
        <note>ligand shared between two neighboring subunits</note>
    </ligand>
</feature>
<feature type="binding site" evidence="1">
    <location>
        <position position="241"/>
    </location>
    <ligand>
        <name>ATP</name>
        <dbReference type="ChEBI" id="CHEBI:30616"/>
        <note>ligand shared between two neighboring subunits</note>
    </ligand>
</feature>
<feature type="binding site" evidence="1">
    <location>
        <position position="241"/>
    </location>
    <ligand>
        <name>L-methionine</name>
        <dbReference type="ChEBI" id="CHEBI:57844"/>
        <note>ligand shared between two neighboring subunits</note>
    </ligand>
</feature>
<feature type="binding site" description="in other chain" evidence="1">
    <location>
        <begin position="247"/>
        <end position="248"/>
    </location>
    <ligand>
        <name>ATP</name>
        <dbReference type="ChEBI" id="CHEBI:30616"/>
        <note>ligand shared between two neighboring subunits</note>
    </ligand>
</feature>
<feature type="binding site" evidence="1">
    <location>
        <position position="264"/>
    </location>
    <ligand>
        <name>ATP</name>
        <dbReference type="ChEBI" id="CHEBI:30616"/>
        <note>ligand shared between two neighboring subunits</note>
    </ligand>
</feature>
<feature type="binding site" evidence="1">
    <location>
        <position position="268"/>
    </location>
    <ligand>
        <name>ATP</name>
        <dbReference type="ChEBI" id="CHEBI:30616"/>
        <note>ligand shared between two neighboring subunits</note>
    </ligand>
</feature>
<feature type="binding site" description="in other chain" evidence="1">
    <location>
        <position position="272"/>
    </location>
    <ligand>
        <name>L-methionine</name>
        <dbReference type="ChEBI" id="CHEBI:57844"/>
        <note>ligand shared between two neighboring subunits</note>
    </ligand>
</feature>
<proteinExistence type="inferred from homology"/>
<sequence length="403" mass="43663">MSSYLFTSESVSEGHPDKIADQISDAVLDAILAQDKRARVACETMVKTGVAIVAGEVTTSAWIDLEALTRKVILDIGYNSSDVGFDGETCGVLNLIGKQSPDINQGVDRKNPEQQGAGDQGLMFGYATNETDSFMPAAIHLSHRLVEQQAKIRKKKNSALSWLRPDAKSQVTLRYEDGVATAIDAVVLSTQHDPGVKQKDLIEAVREEILKPVLPAKWLHKGTKFHINPTGKFVIGGPVGDCGLTGRKIIVDTYGGWARHGGGAFSGKDPSKVDRSAAYAARYVAKNVVAAGLADRCEVQVSYAIGVAEPTSISVTTFGTGKIADEQIEKLIRKHFDLRPFGIIQMLDLIHPMYQQTASYGHFGRKPKDFTYTDGTGAQHSATSFSWEKTDRADALRAAAKLK</sequence>
<keyword id="KW-0067">ATP-binding</keyword>
<keyword id="KW-0963">Cytoplasm</keyword>
<keyword id="KW-0460">Magnesium</keyword>
<keyword id="KW-0479">Metal-binding</keyword>
<keyword id="KW-0547">Nucleotide-binding</keyword>
<keyword id="KW-0554">One-carbon metabolism</keyword>
<keyword id="KW-0630">Potassium</keyword>
<keyword id="KW-1185">Reference proteome</keyword>
<keyword id="KW-0808">Transferase</keyword>
<reference key="1">
    <citation type="journal article" date="2005" name="Nucleic Acids Res.">
        <title>The genome sequence of Xanthomonas oryzae pathovar oryzae KACC10331, the bacterial blight pathogen of rice.</title>
        <authorList>
            <person name="Lee B.-M."/>
            <person name="Park Y.-J."/>
            <person name="Park D.-S."/>
            <person name="Kang H.-W."/>
            <person name="Kim J.-G."/>
            <person name="Song E.-S."/>
            <person name="Park I.-C."/>
            <person name="Yoon U.-H."/>
            <person name="Hahn J.-H."/>
            <person name="Koo B.-S."/>
            <person name="Lee G.-B."/>
            <person name="Kim H."/>
            <person name="Park H.-S."/>
            <person name="Yoon K.-O."/>
            <person name="Kim J.-H."/>
            <person name="Jung C.-H."/>
            <person name="Koh N.-H."/>
            <person name="Seo J.-S."/>
            <person name="Go S.-J."/>
        </authorList>
    </citation>
    <scope>NUCLEOTIDE SEQUENCE [LARGE SCALE GENOMIC DNA]</scope>
    <source>
        <strain>KACC10331 / KXO85</strain>
    </source>
</reference>
<protein>
    <recommendedName>
        <fullName evidence="1">S-adenosylmethionine synthase</fullName>
        <shortName evidence="1">AdoMet synthase</shortName>
        <ecNumber evidence="1">2.5.1.6</ecNumber>
    </recommendedName>
    <alternativeName>
        <fullName evidence="1">MAT</fullName>
    </alternativeName>
    <alternativeName>
        <fullName evidence="1">Methionine adenosyltransferase</fullName>
    </alternativeName>
</protein>
<gene>
    <name evidence="1" type="primary">metK</name>
    <name type="ordered locus">XOO3791</name>
</gene>
<name>METK_XANOR</name>
<comment type="function">
    <text evidence="1">Catalyzes the formation of S-adenosylmethionine (AdoMet) from methionine and ATP. The overall synthetic reaction is composed of two sequential steps, AdoMet formation and the subsequent tripolyphosphate hydrolysis which occurs prior to release of AdoMet from the enzyme.</text>
</comment>
<comment type="catalytic activity">
    <reaction evidence="1">
        <text>L-methionine + ATP + H2O = S-adenosyl-L-methionine + phosphate + diphosphate</text>
        <dbReference type="Rhea" id="RHEA:21080"/>
        <dbReference type="ChEBI" id="CHEBI:15377"/>
        <dbReference type="ChEBI" id="CHEBI:30616"/>
        <dbReference type="ChEBI" id="CHEBI:33019"/>
        <dbReference type="ChEBI" id="CHEBI:43474"/>
        <dbReference type="ChEBI" id="CHEBI:57844"/>
        <dbReference type="ChEBI" id="CHEBI:59789"/>
        <dbReference type="EC" id="2.5.1.6"/>
    </reaction>
</comment>
<comment type="cofactor">
    <cofactor evidence="1">
        <name>Mg(2+)</name>
        <dbReference type="ChEBI" id="CHEBI:18420"/>
    </cofactor>
    <text evidence="1">Binds 2 divalent ions per subunit.</text>
</comment>
<comment type="cofactor">
    <cofactor evidence="1">
        <name>K(+)</name>
        <dbReference type="ChEBI" id="CHEBI:29103"/>
    </cofactor>
    <text evidence="1">Binds 1 potassium ion per subunit.</text>
</comment>
<comment type="pathway">
    <text evidence="1">Amino-acid biosynthesis; S-adenosyl-L-methionine biosynthesis; S-adenosyl-L-methionine from L-methionine: step 1/1.</text>
</comment>
<comment type="subunit">
    <text evidence="1">Homotetramer; dimer of dimers.</text>
</comment>
<comment type="subcellular location">
    <subcellularLocation>
        <location evidence="1">Cytoplasm</location>
    </subcellularLocation>
</comment>
<comment type="similarity">
    <text evidence="1">Belongs to the AdoMet synthase family.</text>
</comment>
<evidence type="ECO:0000255" key="1">
    <source>
        <dbReference type="HAMAP-Rule" id="MF_00086"/>
    </source>
</evidence>
<organism>
    <name type="scientific">Xanthomonas oryzae pv. oryzae (strain KACC10331 / KXO85)</name>
    <dbReference type="NCBI Taxonomy" id="291331"/>
    <lineage>
        <taxon>Bacteria</taxon>
        <taxon>Pseudomonadati</taxon>
        <taxon>Pseudomonadota</taxon>
        <taxon>Gammaproteobacteria</taxon>
        <taxon>Lysobacterales</taxon>
        <taxon>Lysobacteraceae</taxon>
        <taxon>Xanthomonas</taxon>
    </lineage>
</organism>
<dbReference type="EC" id="2.5.1.6" evidence="1"/>
<dbReference type="EMBL" id="AE013598">
    <property type="protein sequence ID" value="AAW77045.1"/>
    <property type="molecule type" value="Genomic_DNA"/>
</dbReference>
<dbReference type="SMR" id="Q5GW76"/>
<dbReference type="STRING" id="291331.XOO3791"/>
<dbReference type="KEGG" id="xoo:XOO3791"/>
<dbReference type="HOGENOM" id="CLU_041802_1_1_6"/>
<dbReference type="UniPathway" id="UPA00315">
    <property type="reaction ID" value="UER00080"/>
</dbReference>
<dbReference type="Proteomes" id="UP000006735">
    <property type="component" value="Chromosome"/>
</dbReference>
<dbReference type="GO" id="GO:0005737">
    <property type="term" value="C:cytoplasm"/>
    <property type="evidence" value="ECO:0007669"/>
    <property type="project" value="UniProtKB-SubCell"/>
</dbReference>
<dbReference type="GO" id="GO:0005524">
    <property type="term" value="F:ATP binding"/>
    <property type="evidence" value="ECO:0007669"/>
    <property type="project" value="UniProtKB-UniRule"/>
</dbReference>
<dbReference type="GO" id="GO:0000287">
    <property type="term" value="F:magnesium ion binding"/>
    <property type="evidence" value="ECO:0007669"/>
    <property type="project" value="UniProtKB-UniRule"/>
</dbReference>
<dbReference type="GO" id="GO:0004478">
    <property type="term" value="F:methionine adenosyltransferase activity"/>
    <property type="evidence" value="ECO:0007669"/>
    <property type="project" value="UniProtKB-UniRule"/>
</dbReference>
<dbReference type="GO" id="GO:0006730">
    <property type="term" value="P:one-carbon metabolic process"/>
    <property type="evidence" value="ECO:0007669"/>
    <property type="project" value="UniProtKB-KW"/>
</dbReference>
<dbReference type="GO" id="GO:0006556">
    <property type="term" value="P:S-adenosylmethionine biosynthetic process"/>
    <property type="evidence" value="ECO:0007669"/>
    <property type="project" value="UniProtKB-UniRule"/>
</dbReference>
<dbReference type="CDD" id="cd18079">
    <property type="entry name" value="S-AdoMet_synt"/>
    <property type="match status" value="1"/>
</dbReference>
<dbReference type="FunFam" id="3.30.300.10:FF:000003">
    <property type="entry name" value="S-adenosylmethionine synthase"/>
    <property type="match status" value="1"/>
</dbReference>
<dbReference type="FunFam" id="3.30.300.10:FF:000004">
    <property type="entry name" value="S-adenosylmethionine synthase"/>
    <property type="match status" value="1"/>
</dbReference>
<dbReference type="Gene3D" id="3.30.300.10">
    <property type="match status" value="3"/>
</dbReference>
<dbReference type="HAMAP" id="MF_00086">
    <property type="entry name" value="S_AdoMet_synth1"/>
    <property type="match status" value="1"/>
</dbReference>
<dbReference type="InterPro" id="IPR022631">
    <property type="entry name" value="ADOMET_SYNTHASE_CS"/>
</dbReference>
<dbReference type="InterPro" id="IPR022630">
    <property type="entry name" value="S-AdoMet_synt_C"/>
</dbReference>
<dbReference type="InterPro" id="IPR022629">
    <property type="entry name" value="S-AdoMet_synt_central"/>
</dbReference>
<dbReference type="InterPro" id="IPR022628">
    <property type="entry name" value="S-AdoMet_synt_N"/>
</dbReference>
<dbReference type="InterPro" id="IPR002133">
    <property type="entry name" value="S-AdoMet_synthetase"/>
</dbReference>
<dbReference type="InterPro" id="IPR022636">
    <property type="entry name" value="S-AdoMet_synthetase_sfam"/>
</dbReference>
<dbReference type="NCBIfam" id="TIGR01034">
    <property type="entry name" value="metK"/>
    <property type="match status" value="1"/>
</dbReference>
<dbReference type="PANTHER" id="PTHR11964">
    <property type="entry name" value="S-ADENOSYLMETHIONINE SYNTHETASE"/>
    <property type="match status" value="1"/>
</dbReference>
<dbReference type="Pfam" id="PF02773">
    <property type="entry name" value="S-AdoMet_synt_C"/>
    <property type="match status" value="1"/>
</dbReference>
<dbReference type="Pfam" id="PF02772">
    <property type="entry name" value="S-AdoMet_synt_M"/>
    <property type="match status" value="1"/>
</dbReference>
<dbReference type="Pfam" id="PF00438">
    <property type="entry name" value="S-AdoMet_synt_N"/>
    <property type="match status" value="1"/>
</dbReference>
<dbReference type="PIRSF" id="PIRSF000497">
    <property type="entry name" value="MAT"/>
    <property type="match status" value="1"/>
</dbReference>
<dbReference type="SUPFAM" id="SSF55973">
    <property type="entry name" value="S-adenosylmethionine synthetase"/>
    <property type="match status" value="3"/>
</dbReference>
<dbReference type="PROSITE" id="PS00376">
    <property type="entry name" value="ADOMET_SYNTHASE_1"/>
    <property type="match status" value="1"/>
</dbReference>
<dbReference type="PROSITE" id="PS00377">
    <property type="entry name" value="ADOMET_SYNTHASE_2"/>
    <property type="match status" value="1"/>
</dbReference>
<accession>Q5GW76</accession>